<keyword id="KW-0963">Cytoplasm</keyword>
<keyword id="KW-0489">Methyltransferase</keyword>
<keyword id="KW-0698">rRNA processing</keyword>
<keyword id="KW-0949">S-adenosyl-L-methionine</keyword>
<keyword id="KW-0808">Transferase</keyword>
<dbReference type="EC" id="2.1.1.199" evidence="1"/>
<dbReference type="EMBL" id="CP000123">
    <property type="protein sequence ID" value="ABC01421.1"/>
    <property type="molecule type" value="Genomic_DNA"/>
</dbReference>
<dbReference type="RefSeq" id="WP_011387268.1">
    <property type="nucleotide sequence ID" value="NC_007633.1"/>
</dbReference>
<dbReference type="SMR" id="Q2SS95"/>
<dbReference type="GeneID" id="23778657"/>
<dbReference type="KEGG" id="mcp:MCAP_0388"/>
<dbReference type="HOGENOM" id="CLU_038422_2_0_14"/>
<dbReference type="PhylomeDB" id="Q2SS95"/>
<dbReference type="Proteomes" id="UP000001928">
    <property type="component" value="Chromosome"/>
</dbReference>
<dbReference type="GO" id="GO:0005737">
    <property type="term" value="C:cytoplasm"/>
    <property type="evidence" value="ECO:0007669"/>
    <property type="project" value="UniProtKB-SubCell"/>
</dbReference>
<dbReference type="GO" id="GO:0071424">
    <property type="term" value="F:rRNA (cytosine-N4-)-methyltransferase activity"/>
    <property type="evidence" value="ECO:0007669"/>
    <property type="project" value="UniProtKB-UniRule"/>
</dbReference>
<dbReference type="GO" id="GO:0070475">
    <property type="term" value="P:rRNA base methylation"/>
    <property type="evidence" value="ECO:0007669"/>
    <property type="project" value="UniProtKB-UniRule"/>
</dbReference>
<dbReference type="Gene3D" id="1.10.150.170">
    <property type="entry name" value="Putative methyltransferase TM0872, insert domain"/>
    <property type="match status" value="1"/>
</dbReference>
<dbReference type="Gene3D" id="3.40.50.150">
    <property type="entry name" value="Vaccinia Virus protein VP39"/>
    <property type="match status" value="1"/>
</dbReference>
<dbReference type="HAMAP" id="MF_01007">
    <property type="entry name" value="16SrRNA_methyltr_H"/>
    <property type="match status" value="1"/>
</dbReference>
<dbReference type="InterPro" id="IPR002903">
    <property type="entry name" value="RsmH"/>
</dbReference>
<dbReference type="InterPro" id="IPR023397">
    <property type="entry name" value="SAM-dep_MeTrfase_MraW_recog"/>
</dbReference>
<dbReference type="InterPro" id="IPR029063">
    <property type="entry name" value="SAM-dependent_MTases_sf"/>
</dbReference>
<dbReference type="NCBIfam" id="TIGR00006">
    <property type="entry name" value="16S rRNA (cytosine(1402)-N(4))-methyltransferase RsmH"/>
    <property type="match status" value="1"/>
</dbReference>
<dbReference type="PANTHER" id="PTHR11265:SF0">
    <property type="entry name" value="12S RRNA N4-METHYLCYTIDINE METHYLTRANSFERASE"/>
    <property type="match status" value="1"/>
</dbReference>
<dbReference type="PANTHER" id="PTHR11265">
    <property type="entry name" value="S-ADENOSYL-METHYLTRANSFERASE MRAW"/>
    <property type="match status" value="1"/>
</dbReference>
<dbReference type="Pfam" id="PF01795">
    <property type="entry name" value="Methyltransf_5"/>
    <property type="match status" value="1"/>
</dbReference>
<dbReference type="PIRSF" id="PIRSF004486">
    <property type="entry name" value="MraW"/>
    <property type="match status" value="1"/>
</dbReference>
<dbReference type="SUPFAM" id="SSF81799">
    <property type="entry name" value="Putative methyltransferase TM0872, insert domain"/>
    <property type="match status" value="1"/>
</dbReference>
<dbReference type="SUPFAM" id="SSF53335">
    <property type="entry name" value="S-adenosyl-L-methionine-dependent methyltransferases"/>
    <property type="match status" value="1"/>
</dbReference>
<sequence length="309" mass="35028">MDKHIPVLLDESIKYLNIKLNGIYVDCTLGRAGHASEILKRLSQNGFLYAIDQDKTAIGQAKEKLEKISNNFFLIQGNFSNLSALLAINHIFSVDGILYDLGVSSPQLDIGSRGFSYRIDGPLDMRMDITNNNLTADTIINQYSETQIEDILFKYGEESFAKSIAKKIVLSRPINSTLQLVEVIKSALPQKVLKQKKHPAKKTFQALRIFINNELIVLENSLKQALDLLNSKGRICVITFHSLEEKIVKNIFNSSTNYFQEQLFNNLPIKANLNSQFKLVIKKPIKPSLLELENNHRSHSAKLWVIEKN</sequence>
<proteinExistence type="inferred from homology"/>
<name>RSMH_MYCCT</name>
<reference key="1">
    <citation type="submission" date="2005-09" db="EMBL/GenBank/DDBJ databases">
        <authorList>
            <person name="Glass J.I."/>
            <person name="Lartigue C."/>
            <person name="Pfannkoch C."/>
            <person name="Baden-Tillson H."/>
            <person name="Smith H.O."/>
            <person name="Venter J.C."/>
            <person name="Roske K."/>
            <person name="Wise K.S."/>
            <person name="Calcutt M.J."/>
            <person name="Nelson W.C."/>
            <person name="Nierman W.C."/>
        </authorList>
    </citation>
    <scope>NUCLEOTIDE SEQUENCE [LARGE SCALE GENOMIC DNA]</scope>
    <source>
        <strain>California kid / ATCC 27343 / NCTC 10154</strain>
    </source>
</reference>
<gene>
    <name evidence="1" type="primary">rsmH</name>
    <name type="synonym">mraW</name>
    <name type="ordered locus">MCAP_0388</name>
</gene>
<protein>
    <recommendedName>
        <fullName evidence="1">Ribosomal RNA small subunit methyltransferase H</fullName>
        <ecNumber evidence="1">2.1.1.199</ecNumber>
    </recommendedName>
    <alternativeName>
        <fullName evidence="1">16S rRNA m(4)C1402 methyltransferase</fullName>
    </alternativeName>
    <alternativeName>
        <fullName evidence="1">rRNA (cytosine-N(4)-)-methyltransferase RsmH</fullName>
    </alternativeName>
</protein>
<accession>Q2SS95</accession>
<feature type="chain" id="PRO_0000387000" description="Ribosomal RNA small subunit methyltransferase H">
    <location>
        <begin position="1"/>
        <end position="309"/>
    </location>
</feature>
<feature type="binding site" evidence="1">
    <location>
        <begin position="32"/>
        <end position="34"/>
    </location>
    <ligand>
        <name>S-adenosyl-L-methionine</name>
        <dbReference type="ChEBI" id="CHEBI:59789"/>
    </ligand>
</feature>
<feature type="binding site" evidence="1">
    <location>
        <position position="52"/>
    </location>
    <ligand>
        <name>S-adenosyl-L-methionine</name>
        <dbReference type="ChEBI" id="CHEBI:59789"/>
    </ligand>
</feature>
<feature type="binding site" evidence="1">
    <location>
        <position position="79"/>
    </location>
    <ligand>
        <name>S-adenosyl-L-methionine</name>
        <dbReference type="ChEBI" id="CHEBI:59789"/>
    </ligand>
</feature>
<feature type="binding site" evidence="1">
    <location>
        <position position="100"/>
    </location>
    <ligand>
        <name>S-adenosyl-L-methionine</name>
        <dbReference type="ChEBI" id="CHEBI:59789"/>
    </ligand>
</feature>
<feature type="binding site" evidence="1">
    <location>
        <position position="107"/>
    </location>
    <ligand>
        <name>S-adenosyl-L-methionine</name>
        <dbReference type="ChEBI" id="CHEBI:59789"/>
    </ligand>
</feature>
<evidence type="ECO:0000255" key="1">
    <source>
        <dbReference type="HAMAP-Rule" id="MF_01007"/>
    </source>
</evidence>
<comment type="function">
    <text evidence="1">Specifically methylates the N4 position of cytidine in position 1402 (C1402) of 16S rRNA.</text>
</comment>
<comment type="catalytic activity">
    <reaction evidence="1">
        <text>cytidine(1402) in 16S rRNA + S-adenosyl-L-methionine = N(4)-methylcytidine(1402) in 16S rRNA + S-adenosyl-L-homocysteine + H(+)</text>
        <dbReference type="Rhea" id="RHEA:42928"/>
        <dbReference type="Rhea" id="RHEA-COMP:10286"/>
        <dbReference type="Rhea" id="RHEA-COMP:10287"/>
        <dbReference type="ChEBI" id="CHEBI:15378"/>
        <dbReference type="ChEBI" id="CHEBI:57856"/>
        <dbReference type="ChEBI" id="CHEBI:59789"/>
        <dbReference type="ChEBI" id="CHEBI:74506"/>
        <dbReference type="ChEBI" id="CHEBI:82748"/>
        <dbReference type="EC" id="2.1.1.199"/>
    </reaction>
</comment>
<comment type="subcellular location">
    <subcellularLocation>
        <location evidence="1">Cytoplasm</location>
    </subcellularLocation>
</comment>
<comment type="similarity">
    <text evidence="1">Belongs to the methyltransferase superfamily. RsmH family.</text>
</comment>
<organism>
    <name type="scientific">Mycoplasma capricolum subsp. capricolum (strain California kid / ATCC 27343 / NCTC 10154)</name>
    <dbReference type="NCBI Taxonomy" id="340047"/>
    <lineage>
        <taxon>Bacteria</taxon>
        <taxon>Bacillati</taxon>
        <taxon>Mycoplasmatota</taxon>
        <taxon>Mollicutes</taxon>
        <taxon>Mycoplasmataceae</taxon>
        <taxon>Mycoplasma</taxon>
    </lineage>
</organism>